<proteinExistence type="inferred from homology"/>
<sequence>MAAKDIRFGEDARTRMVRGVNVLANAVKATLGPKGRNVVLEKSFGAPTITKDGVSVAKEIELADKFENMGAQMVKEVASKTNDNAGDGTTTATVLAQALIREGAKAVAAGMNPMDLKRGIDQAVKAAVIELKNISKPTTDDKAIAQVGTISANSDESIGNIIAEAMQKVGKEGVITVEEGSGLENELDVVEGMQFDRGYLSPYFINNQQSQSADLDDPFILLHDKKISNVRDLLPVLEGVAKAGKPLLIVAEEVEGEALATLVVNTIRGIVKVVAVKAPGFGDRRKAMLEDMAVLTGGTVISEEVGLALEKATIKDLGRAKKVQVSKENTTIIDGAGDSATIEARVGQIKTQIEDTSSDYDREKLQERVAKLAGGVAVIKVGASTEIEMKEKKARVEDALHATRAAVEEGVVPGGGVALVRALVAVGNLTGANEDQTHGIQIALRAMEAPLREIVANAGEEPSVILNKVKEGTGNYGYNAANGEFGDMVEFGILDPTKVTRSALQNAASIAGLMITTEAMVADAPKKDEPAMPAGGGMGGMGGMDF</sequence>
<feature type="chain" id="PRO_0000257019" description="Chaperonin GroEL">
    <location>
        <begin position="1"/>
        <end position="546"/>
    </location>
</feature>
<feature type="region of interest" description="Disordered" evidence="2">
    <location>
        <begin position="526"/>
        <end position="546"/>
    </location>
</feature>
<feature type="compositionally biased region" description="Gly residues" evidence="2">
    <location>
        <begin position="534"/>
        <end position="546"/>
    </location>
</feature>
<feature type="binding site" evidence="1">
    <location>
        <begin position="30"/>
        <end position="33"/>
    </location>
    <ligand>
        <name>ATP</name>
        <dbReference type="ChEBI" id="CHEBI:30616"/>
    </ligand>
</feature>
<feature type="binding site" evidence="1">
    <location>
        <position position="51"/>
    </location>
    <ligand>
        <name>ATP</name>
        <dbReference type="ChEBI" id="CHEBI:30616"/>
    </ligand>
</feature>
<feature type="binding site" evidence="1">
    <location>
        <begin position="87"/>
        <end position="91"/>
    </location>
    <ligand>
        <name>ATP</name>
        <dbReference type="ChEBI" id="CHEBI:30616"/>
    </ligand>
</feature>
<feature type="binding site" evidence="1">
    <location>
        <position position="415"/>
    </location>
    <ligand>
        <name>ATP</name>
        <dbReference type="ChEBI" id="CHEBI:30616"/>
    </ligand>
</feature>
<feature type="binding site" evidence="1">
    <location>
        <begin position="479"/>
        <end position="481"/>
    </location>
    <ligand>
        <name>ATP</name>
        <dbReference type="ChEBI" id="CHEBI:30616"/>
    </ligand>
</feature>
<feature type="binding site" evidence="1">
    <location>
        <position position="495"/>
    </location>
    <ligand>
        <name>ATP</name>
        <dbReference type="ChEBI" id="CHEBI:30616"/>
    </ligand>
</feature>
<evidence type="ECO:0000255" key="1">
    <source>
        <dbReference type="HAMAP-Rule" id="MF_00600"/>
    </source>
</evidence>
<evidence type="ECO:0000256" key="2">
    <source>
        <dbReference type="SAM" id="MobiDB-lite"/>
    </source>
</evidence>
<gene>
    <name evidence="1" type="primary">groEL</name>
    <name evidence="1" type="synonym">groL</name>
    <name type="ordered locus">XC_0535</name>
</gene>
<protein>
    <recommendedName>
        <fullName evidence="1">Chaperonin GroEL</fullName>
        <ecNumber evidence="1">5.6.1.7</ecNumber>
    </recommendedName>
    <alternativeName>
        <fullName evidence="1">60 kDa chaperonin</fullName>
    </alternativeName>
    <alternativeName>
        <fullName evidence="1">Chaperonin-60</fullName>
        <shortName evidence="1">Cpn60</shortName>
    </alternativeName>
</protein>
<organism>
    <name type="scientific">Xanthomonas campestris pv. campestris (strain 8004)</name>
    <dbReference type="NCBI Taxonomy" id="314565"/>
    <lineage>
        <taxon>Bacteria</taxon>
        <taxon>Pseudomonadati</taxon>
        <taxon>Pseudomonadota</taxon>
        <taxon>Gammaproteobacteria</taxon>
        <taxon>Lysobacterales</taxon>
        <taxon>Lysobacteraceae</taxon>
        <taxon>Xanthomonas</taxon>
    </lineage>
</organism>
<dbReference type="EC" id="5.6.1.7" evidence="1"/>
<dbReference type="EMBL" id="CP000050">
    <property type="protein sequence ID" value="AAY47616.1"/>
    <property type="molecule type" value="Genomic_DNA"/>
</dbReference>
<dbReference type="RefSeq" id="WP_011035771.1">
    <property type="nucleotide sequence ID" value="NZ_CP155948.1"/>
</dbReference>
<dbReference type="SMR" id="Q4UZA7"/>
<dbReference type="GeneID" id="79387880"/>
<dbReference type="KEGG" id="xcb:XC_0535"/>
<dbReference type="HOGENOM" id="CLU_016503_3_0_6"/>
<dbReference type="Proteomes" id="UP000000420">
    <property type="component" value="Chromosome"/>
</dbReference>
<dbReference type="GO" id="GO:0005737">
    <property type="term" value="C:cytoplasm"/>
    <property type="evidence" value="ECO:0007669"/>
    <property type="project" value="UniProtKB-SubCell"/>
</dbReference>
<dbReference type="GO" id="GO:0005524">
    <property type="term" value="F:ATP binding"/>
    <property type="evidence" value="ECO:0007669"/>
    <property type="project" value="UniProtKB-UniRule"/>
</dbReference>
<dbReference type="GO" id="GO:0140662">
    <property type="term" value="F:ATP-dependent protein folding chaperone"/>
    <property type="evidence" value="ECO:0007669"/>
    <property type="project" value="InterPro"/>
</dbReference>
<dbReference type="GO" id="GO:0016853">
    <property type="term" value="F:isomerase activity"/>
    <property type="evidence" value="ECO:0007669"/>
    <property type="project" value="UniProtKB-KW"/>
</dbReference>
<dbReference type="GO" id="GO:0051082">
    <property type="term" value="F:unfolded protein binding"/>
    <property type="evidence" value="ECO:0007669"/>
    <property type="project" value="UniProtKB-UniRule"/>
</dbReference>
<dbReference type="GO" id="GO:0042026">
    <property type="term" value="P:protein refolding"/>
    <property type="evidence" value="ECO:0007669"/>
    <property type="project" value="UniProtKB-UniRule"/>
</dbReference>
<dbReference type="CDD" id="cd03344">
    <property type="entry name" value="GroEL"/>
    <property type="match status" value="1"/>
</dbReference>
<dbReference type="FunFam" id="1.10.560.10:FF:000001">
    <property type="entry name" value="60 kDa chaperonin"/>
    <property type="match status" value="1"/>
</dbReference>
<dbReference type="FunFam" id="3.50.7.10:FF:000001">
    <property type="entry name" value="60 kDa chaperonin"/>
    <property type="match status" value="1"/>
</dbReference>
<dbReference type="Gene3D" id="3.50.7.10">
    <property type="entry name" value="GroEL"/>
    <property type="match status" value="1"/>
</dbReference>
<dbReference type="Gene3D" id="1.10.560.10">
    <property type="entry name" value="GroEL-like equatorial domain"/>
    <property type="match status" value="1"/>
</dbReference>
<dbReference type="Gene3D" id="3.30.260.10">
    <property type="entry name" value="TCP-1-like chaperonin intermediate domain"/>
    <property type="match status" value="1"/>
</dbReference>
<dbReference type="HAMAP" id="MF_00600">
    <property type="entry name" value="CH60"/>
    <property type="match status" value="1"/>
</dbReference>
<dbReference type="InterPro" id="IPR018370">
    <property type="entry name" value="Chaperonin_Cpn60_CS"/>
</dbReference>
<dbReference type="InterPro" id="IPR001844">
    <property type="entry name" value="Cpn60/GroEL"/>
</dbReference>
<dbReference type="InterPro" id="IPR002423">
    <property type="entry name" value="Cpn60/GroEL/TCP-1"/>
</dbReference>
<dbReference type="InterPro" id="IPR027409">
    <property type="entry name" value="GroEL-like_apical_dom_sf"/>
</dbReference>
<dbReference type="InterPro" id="IPR027413">
    <property type="entry name" value="GROEL-like_equatorial_sf"/>
</dbReference>
<dbReference type="InterPro" id="IPR027410">
    <property type="entry name" value="TCP-1-like_intermed_sf"/>
</dbReference>
<dbReference type="NCBIfam" id="TIGR02348">
    <property type="entry name" value="GroEL"/>
    <property type="match status" value="1"/>
</dbReference>
<dbReference type="NCBIfam" id="NF000592">
    <property type="entry name" value="PRK00013.1"/>
    <property type="match status" value="1"/>
</dbReference>
<dbReference type="NCBIfam" id="NF009487">
    <property type="entry name" value="PRK12849.1"/>
    <property type="match status" value="1"/>
</dbReference>
<dbReference type="NCBIfam" id="NF009488">
    <property type="entry name" value="PRK12850.1"/>
    <property type="match status" value="1"/>
</dbReference>
<dbReference type="NCBIfam" id="NF009489">
    <property type="entry name" value="PRK12851.1"/>
    <property type="match status" value="1"/>
</dbReference>
<dbReference type="PANTHER" id="PTHR45633">
    <property type="entry name" value="60 KDA HEAT SHOCK PROTEIN, MITOCHONDRIAL"/>
    <property type="match status" value="1"/>
</dbReference>
<dbReference type="Pfam" id="PF00118">
    <property type="entry name" value="Cpn60_TCP1"/>
    <property type="match status" value="1"/>
</dbReference>
<dbReference type="PRINTS" id="PR00298">
    <property type="entry name" value="CHAPERONIN60"/>
</dbReference>
<dbReference type="SUPFAM" id="SSF52029">
    <property type="entry name" value="GroEL apical domain-like"/>
    <property type="match status" value="1"/>
</dbReference>
<dbReference type="SUPFAM" id="SSF48592">
    <property type="entry name" value="GroEL equatorial domain-like"/>
    <property type="match status" value="1"/>
</dbReference>
<dbReference type="SUPFAM" id="SSF54849">
    <property type="entry name" value="GroEL-intermediate domain like"/>
    <property type="match status" value="1"/>
</dbReference>
<dbReference type="PROSITE" id="PS00296">
    <property type="entry name" value="CHAPERONINS_CPN60"/>
    <property type="match status" value="1"/>
</dbReference>
<name>CH60_XANC8</name>
<accession>Q4UZA7</accession>
<comment type="function">
    <text evidence="1">Together with its co-chaperonin GroES, plays an essential role in assisting protein folding. The GroEL-GroES system forms a nano-cage that allows encapsulation of the non-native substrate proteins and provides a physical environment optimized to promote and accelerate protein folding.</text>
</comment>
<comment type="catalytic activity">
    <reaction evidence="1">
        <text>ATP + H2O + a folded polypeptide = ADP + phosphate + an unfolded polypeptide.</text>
        <dbReference type="EC" id="5.6.1.7"/>
    </reaction>
</comment>
<comment type="subunit">
    <text evidence="1">Forms a cylinder of 14 subunits composed of two heptameric rings stacked back-to-back. Interacts with the co-chaperonin GroES.</text>
</comment>
<comment type="subcellular location">
    <subcellularLocation>
        <location evidence="1">Cytoplasm</location>
    </subcellularLocation>
</comment>
<comment type="similarity">
    <text evidence="1">Belongs to the chaperonin (HSP60) family.</text>
</comment>
<reference key="1">
    <citation type="journal article" date="2005" name="Genome Res.">
        <title>Comparative and functional genomic analyses of the pathogenicity of phytopathogen Xanthomonas campestris pv. campestris.</title>
        <authorList>
            <person name="Qian W."/>
            <person name="Jia Y."/>
            <person name="Ren S.-X."/>
            <person name="He Y.-Q."/>
            <person name="Feng J.-X."/>
            <person name="Lu L.-F."/>
            <person name="Sun Q."/>
            <person name="Ying G."/>
            <person name="Tang D.-J."/>
            <person name="Tang H."/>
            <person name="Wu W."/>
            <person name="Hao P."/>
            <person name="Wang L."/>
            <person name="Jiang B.-L."/>
            <person name="Zeng S."/>
            <person name="Gu W.-Y."/>
            <person name="Lu G."/>
            <person name="Rong L."/>
            <person name="Tian Y."/>
            <person name="Yao Z."/>
            <person name="Fu G."/>
            <person name="Chen B."/>
            <person name="Fang R."/>
            <person name="Qiang B."/>
            <person name="Chen Z."/>
            <person name="Zhao G.-P."/>
            <person name="Tang J.-L."/>
            <person name="He C."/>
        </authorList>
    </citation>
    <scope>NUCLEOTIDE SEQUENCE [LARGE SCALE GENOMIC DNA]</scope>
    <source>
        <strain>8004</strain>
    </source>
</reference>
<keyword id="KW-0067">ATP-binding</keyword>
<keyword id="KW-0143">Chaperone</keyword>
<keyword id="KW-0963">Cytoplasm</keyword>
<keyword id="KW-0413">Isomerase</keyword>
<keyword id="KW-0547">Nucleotide-binding</keyword>